<dbReference type="EC" id="2.1.1.176" evidence="1"/>
<dbReference type="EMBL" id="CP000647">
    <property type="protein sequence ID" value="ABR79076.1"/>
    <property type="molecule type" value="Genomic_DNA"/>
</dbReference>
<dbReference type="RefSeq" id="WP_015959078.1">
    <property type="nucleotide sequence ID" value="NC_009648.1"/>
</dbReference>
<dbReference type="SMR" id="A6TEU2"/>
<dbReference type="STRING" id="272620.KPN_03689"/>
<dbReference type="PaxDb" id="272620-KPN_03689"/>
<dbReference type="EnsemblBacteria" id="ABR79076">
    <property type="protein sequence ID" value="ABR79076"/>
    <property type="gene ID" value="KPN_03689"/>
</dbReference>
<dbReference type="KEGG" id="kpn:KPN_03689"/>
<dbReference type="HOGENOM" id="CLU_005316_0_4_6"/>
<dbReference type="Proteomes" id="UP000000265">
    <property type="component" value="Chromosome"/>
</dbReference>
<dbReference type="GO" id="GO:0005829">
    <property type="term" value="C:cytosol"/>
    <property type="evidence" value="ECO:0007669"/>
    <property type="project" value="TreeGrafter"/>
</dbReference>
<dbReference type="GO" id="GO:0003723">
    <property type="term" value="F:RNA binding"/>
    <property type="evidence" value="ECO:0007669"/>
    <property type="project" value="UniProtKB-KW"/>
</dbReference>
<dbReference type="GO" id="GO:0009383">
    <property type="term" value="F:rRNA (cytosine-C5-)-methyltransferase activity"/>
    <property type="evidence" value="ECO:0007669"/>
    <property type="project" value="TreeGrafter"/>
</dbReference>
<dbReference type="GO" id="GO:0006355">
    <property type="term" value="P:regulation of DNA-templated transcription"/>
    <property type="evidence" value="ECO:0007669"/>
    <property type="project" value="InterPro"/>
</dbReference>
<dbReference type="GO" id="GO:0070475">
    <property type="term" value="P:rRNA base methylation"/>
    <property type="evidence" value="ECO:0007669"/>
    <property type="project" value="TreeGrafter"/>
</dbReference>
<dbReference type="CDD" id="cd02440">
    <property type="entry name" value="AdoMet_MTases"/>
    <property type="match status" value="1"/>
</dbReference>
<dbReference type="CDD" id="cd00620">
    <property type="entry name" value="Methyltransferase_Sun"/>
    <property type="match status" value="1"/>
</dbReference>
<dbReference type="FunFam" id="1.10.287.730:FF:000001">
    <property type="entry name" value="Ribosomal RNA small subunit methyltransferase B"/>
    <property type="match status" value="1"/>
</dbReference>
<dbReference type="FunFam" id="1.10.940.10:FF:000002">
    <property type="entry name" value="Ribosomal RNA small subunit methyltransferase B"/>
    <property type="match status" value="1"/>
</dbReference>
<dbReference type="FunFam" id="3.30.70.1170:FF:000002">
    <property type="entry name" value="Ribosomal RNA small subunit methyltransferase B"/>
    <property type="match status" value="1"/>
</dbReference>
<dbReference type="FunFam" id="3.40.50.150:FF:000022">
    <property type="entry name" value="Ribosomal RNA small subunit methyltransferase B"/>
    <property type="match status" value="1"/>
</dbReference>
<dbReference type="Gene3D" id="1.10.287.730">
    <property type="entry name" value="Helix hairpin bin"/>
    <property type="match status" value="1"/>
</dbReference>
<dbReference type="Gene3D" id="1.10.940.10">
    <property type="entry name" value="NusB-like"/>
    <property type="match status" value="1"/>
</dbReference>
<dbReference type="Gene3D" id="3.30.70.1170">
    <property type="entry name" value="Sun protein, domain 3"/>
    <property type="match status" value="1"/>
</dbReference>
<dbReference type="Gene3D" id="3.40.50.150">
    <property type="entry name" value="Vaccinia Virus protein VP39"/>
    <property type="match status" value="1"/>
</dbReference>
<dbReference type="HAMAP" id="MF_01856">
    <property type="entry name" value="16SrRNA_methyltr_B"/>
    <property type="match status" value="1"/>
</dbReference>
<dbReference type="InterPro" id="IPR049560">
    <property type="entry name" value="MeTrfase_RsmB-F_NOP2_cat"/>
</dbReference>
<dbReference type="InterPro" id="IPR001678">
    <property type="entry name" value="MeTrfase_RsmB-F_NOP2_dom"/>
</dbReference>
<dbReference type="InterPro" id="IPR035926">
    <property type="entry name" value="NusB-like_sf"/>
</dbReference>
<dbReference type="InterPro" id="IPR006027">
    <property type="entry name" value="NusB_RsmB_TIM44"/>
</dbReference>
<dbReference type="InterPro" id="IPR023267">
    <property type="entry name" value="RCMT"/>
</dbReference>
<dbReference type="InterPro" id="IPR004573">
    <property type="entry name" value="rRNA_ssu_MeTfrase_B"/>
</dbReference>
<dbReference type="InterPro" id="IPR023541">
    <property type="entry name" value="rRNA_ssu_MeTfrase_B_ent"/>
</dbReference>
<dbReference type="InterPro" id="IPR054728">
    <property type="entry name" value="RsmB-like_ferredoxin"/>
</dbReference>
<dbReference type="InterPro" id="IPR048019">
    <property type="entry name" value="RsmB-like_N"/>
</dbReference>
<dbReference type="InterPro" id="IPR018314">
    <property type="entry name" value="RsmB/NOL1/NOP2-like_CS"/>
</dbReference>
<dbReference type="InterPro" id="IPR029063">
    <property type="entry name" value="SAM-dependent_MTases_sf"/>
</dbReference>
<dbReference type="NCBIfam" id="NF008149">
    <property type="entry name" value="PRK10901.1"/>
    <property type="match status" value="1"/>
</dbReference>
<dbReference type="NCBIfam" id="NF011494">
    <property type="entry name" value="PRK14902.1"/>
    <property type="match status" value="1"/>
</dbReference>
<dbReference type="NCBIfam" id="TIGR00563">
    <property type="entry name" value="rsmB"/>
    <property type="match status" value="1"/>
</dbReference>
<dbReference type="PANTHER" id="PTHR22807:SF61">
    <property type="entry name" value="NOL1_NOP2_SUN FAMILY PROTEIN _ ANTITERMINATION NUSB DOMAIN-CONTAINING PROTEIN"/>
    <property type="match status" value="1"/>
</dbReference>
<dbReference type="PANTHER" id="PTHR22807">
    <property type="entry name" value="NOP2 YEAST -RELATED NOL1/NOP2/FMU SUN DOMAIN-CONTAINING"/>
    <property type="match status" value="1"/>
</dbReference>
<dbReference type="Pfam" id="PF01189">
    <property type="entry name" value="Methyltr_RsmB-F"/>
    <property type="match status" value="1"/>
</dbReference>
<dbReference type="Pfam" id="PF01029">
    <property type="entry name" value="NusB"/>
    <property type="match status" value="1"/>
</dbReference>
<dbReference type="Pfam" id="PF22458">
    <property type="entry name" value="RsmF-B_ferredox"/>
    <property type="match status" value="1"/>
</dbReference>
<dbReference type="PRINTS" id="PR02008">
    <property type="entry name" value="RCMTFAMILY"/>
</dbReference>
<dbReference type="SUPFAM" id="SSF48013">
    <property type="entry name" value="NusB-like"/>
    <property type="match status" value="1"/>
</dbReference>
<dbReference type="SUPFAM" id="SSF53335">
    <property type="entry name" value="S-adenosyl-L-methionine-dependent methyltransferases"/>
    <property type="match status" value="1"/>
</dbReference>
<dbReference type="PROSITE" id="PS01153">
    <property type="entry name" value="NOL1_NOP2_SUN"/>
    <property type="match status" value="1"/>
</dbReference>
<dbReference type="PROSITE" id="PS51686">
    <property type="entry name" value="SAM_MT_RSMB_NOP"/>
    <property type="match status" value="1"/>
</dbReference>
<accession>A6TEU2</accession>
<evidence type="ECO:0000255" key="1">
    <source>
        <dbReference type="HAMAP-Rule" id="MF_01856"/>
    </source>
</evidence>
<sequence>MKKNINLRSLAAQAIEQVVEKGQSLSNVLPPLQQKVSDKDKALLQELCFGVLRTLSQLEWLISKLMARPMTGKQRTVHFLIMVGLYQLLYTRIPPHAALAETVEGAVAIKRPQLKGLINGVLRQFQRQQEALLAEFAEHENRYLHPKWLLKRLQQAWPEQWQEIVEANNQRPPMWLRVNRNHHSRDEWLALLNEAGLEGFTHPDYPDAVRLATPAPVHALPGFAEGWVTVQDASAQGCMRYLQPENGERILDLCAAPGGKTTHILEVAPQAQVMAVDIDEQRLSRVYDNLKRLGVKAEVKQGDGRFPEQWCGNEQFDRILLDAPCSATGVIRRHPDIKWLRRDRDIAELAQLQAEILNAIWGHLKPGGTLVYATCSILPEENSQQIAAFLARTPDAELHATGTPASPGQQNLPGVEEGDGFFYAKLIKRRN</sequence>
<protein>
    <recommendedName>
        <fullName evidence="1">Ribosomal RNA small subunit methyltransferase B</fullName>
        <ecNumber evidence="1">2.1.1.176</ecNumber>
    </recommendedName>
    <alternativeName>
        <fullName evidence="1">16S rRNA m5C967 methyltransferase</fullName>
    </alternativeName>
    <alternativeName>
        <fullName evidence="1">rRNA (cytosine-C(5)-)-methyltransferase RsmB</fullName>
    </alternativeName>
</protein>
<gene>
    <name evidence="1" type="primary">rsmB</name>
    <name evidence="1" type="synonym">sun</name>
    <name type="ordered locus">KPN78578_36520</name>
    <name type="ORF">KPN_03689</name>
</gene>
<reference key="1">
    <citation type="submission" date="2006-09" db="EMBL/GenBank/DDBJ databases">
        <authorList>
            <consortium name="The Klebsiella pneumonia Genome Sequencing Project"/>
            <person name="McClelland M."/>
            <person name="Sanderson E.K."/>
            <person name="Spieth J."/>
            <person name="Clifton W.S."/>
            <person name="Latreille P."/>
            <person name="Sabo A."/>
            <person name="Pepin K."/>
            <person name="Bhonagiri V."/>
            <person name="Porwollik S."/>
            <person name="Ali J."/>
            <person name="Wilson R.K."/>
        </authorList>
    </citation>
    <scope>NUCLEOTIDE SEQUENCE [LARGE SCALE GENOMIC DNA]</scope>
    <source>
        <strain>ATCC 700721 / MGH 78578</strain>
    </source>
</reference>
<comment type="function">
    <text evidence="1">Specifically methylates the cytosine at position 967 (m5C967) of 16S rRNA.</text>
</comment>
<comment type="catalytic activity">
    <reaction evidence="1">
        <text>cytidine(967) in 16S rRNA + S-adenosyl-L-methionine = 5-methylcytidine(967) in 16S rRNA + S-adenosyl-L-homocysteine + H(+)</text>
        <dbReference type="Rhea" id="RHEA:42748"/>
        <dbReference type="Rhea" id="RHEA-COMP:10219"/>
        <dbReference type="Rhea" id="RHEA-COMP:10220"/>
        <dbReference type="ChEBI" id="CHEBI:15378"/>
        <dbReference type="ChEBI" id="CHEBI:57856"/>
        <dbReference type="ChEBI" id="CHEBI:59789"/>
        <dbReference type="ChEBI" id="CHEBI:74483"/>
        <dbReference type="ChEBI" id="CHEBI:82748"/>
        <dbReference type="EC" id="2.1.1.176"/>
    </reaction>
</comment>
<comment type="subcellular location">
    <subcellularLocation>
        <location evidence="1">Cytoplasm</location>
    </subcellularLocation>
</comment>
<comment type="similarity">
    <text evidence="1">Belongs to the class I-like SAM-binding methyltransferase superfamily. RsmB/NOP family.</text>
</comment>
<proteinExistence type="inferred from homology"/>
<keyword id="KW-0963">Cytoplasm</keyword>
<keyword id="KW-0489">Methyltransferase</keyword>
<keyword id="KW-0694">RNA-binding</keyword>
<keyword id="KW-0698">rRNA processing</keyword>
<keyword id="KW-0949">S-adenosyl-L-methionine</keyword>
<keyword id="KW-0808">Transferase</keyword>
<organism>
    <name type="scientific">Klebsiella pneumoniae subsp. pneumoniae (strain ATCC 700721 / MGH 78578)</name>
    <dbReference type="NCBI Taxonomy" id="272620"/>
    <lineage>
        <taxon>Bacteria</taxon>
        <taxon>Pseudomonadati</taxon>
        <taxon>Pseudomonadota</taxon>
        <taxon>Gammaproteobacteria</taxon>
        <taxon>Enterobacterales</taxon>
        <taxon>Enterobacteriaceae</taxon>
        <taxon>Klebsiella/Raoultella group</taxon>
        <taxon>Klebsiella</taxon>
        <taxon>Klebsiella pneumoniae complex</taxon>
    </lineage>
</organism>
<name>RSMB_KLEP7</name>
<feature type="chain" id="PRO_0000366161" description="Ribosomal RNA small subunit methyltransferase B">
    <location>
        <begin position="1"/>
        <end position="431"/>
    </location>
</feature>
<feature type="active site" description="Nucleophile" evidence="1">
    <location>
        <position position="375"/>
    </location>
</feature>
<feature type="binding site" evidence="1">
    <location>
        <begin position="254"/>
        <end position="260"/>
    </location>
    <ligand>
        <name>S-adenosyl-L-methionine</name>
        <dbReference type="ChEBI" id="CHEBI:59789"/>
    </ligand>
</feature>
<feature type="binding site" evidence="1">
    <location>
        <position position="277"/>
    </location>
    <ligand>
        <name>S-adenosyl-L-methionine</name>
        <dbReference type="ChEBI" id="CHEBI:59789"/>
    </ligand>
</feature>
<feature type="binding site" evidence="1">
    <location>
        <position position="303"/>
    </location>
    <ligand>
        <name>S-adenosyl-L-methionine</name>
        <dbReference type="ChEBI" id="CHEBI:59789"/>
    </ligand>
</feature>
<feature type="binding site" evidence="1">
    <location>
        <position position="322"/>
    </location>
    <ligand>
        <name>S-adenosyl-L-methionine</name>
        <dbReference type="ChEBI" id="CHEBI:59789"/>
    </ligand>
</feature>